<proteinExistence type="inferred from homology"/>
<sequence length="294" mass="31958">MTPFGISVPASSGNVGPGFDSTGLALGLYLHLNVEDANSIQFYSDGESTPTENHFIWNIAENIANKHGIRLPACKVQETNEIPLARGLGSSASAIVAGIELANQLGNLHLTPEQKLQYGTEIEGHPDNVAPSIYGGLVISTVLEKEIEHIQLRDIDVDIVAYIPNIELKTSVSRNCLPDSYNRDYAAKASAISNLTIAALYSKDYKLAGKLMEEDLFHEPFRSELIPNFAYIREEAKKYGAFGTILSGAGPTMLSITPKGNGPTLQNNMSKLSLLADYQVEYIPIDYQGISIQE</sequence>
<feature type="chain" id="PRO_0000156592" description="Homoserine kinase">
    <location>
        <begin position="1"/>
        <end position="294"/>
    </location>
</feature>
<feature type="binding site" evidence="1">
    <location>
        <begin position="83"/>
        <end position="93"/>
    </location>
    <ligand>
        <name>ATP</name>
        <dbReference type="ChEBI" id="CHEBI:30616"/>
    </ligand>
</feature>
<organism>
    <name type="scientific">Oceanobacillus iheyensis (strain DSM 14371 / CIP 107618 / JCM 11309 / KCTC 3954 / HTE831)</name>
    <dbReference type="NCBI Taxonomy" id="221109"/>
    <lineage>
        <taxon>Bacteria</taxon>
        <taxon>Bacillati</taxon>
        <taxon>Bacillota</taxon>
        <taxon>Bacilli</taxon>
        <taxon>Bacillales</taxon>
        <taxon>Bacillaceae</taxon>
        <taxon>Oceanobacillus</taxon>
    </lineage>
</organism>
<name>KHSE_OCEIH</name>
<evidence type="ECO:0000255" key="1">
    <source>
        <dbReference type="HAMAP-Rule" id="MF_00384"/>
    </source>
</evidence>
<protein>
    <recommendedName>
        <fullName evidence="1">Homoserine kinase</fullName>
        <shortName evidence="1">HK</shortName>
        <shortName evidence="1">HSK</shortName>
        <ecNumber evidence="1">2.7.1.39</ecNumber>
    </recommendedName>
</protein>
<keyword id="KW-0028">Amino-acid biosynthesis</keyword>
<keyword id="KW-0067">ATP-binding</keyword>
<keyword id="KW-0963">Cytoplasm</keyword>
<keyword id="KW-0418">Kinase</keyword>
<keyword id="KW-0547">Nucleotide-binding</keyword>
<keyword id="KW-1185">Reference proteome</keyword>
<keyword id="KW-0791">Threonine biosynthesis</keyword>
<keyword id="KW-0808">Transferase</keyword>
<dbReference type="EC" id="2.7.1.39" evidence="1"/>
<dbReference type="EMBL" id="BA000028">
    <property type="protein sequence ID" value="BAC12420.1"/>
    <property type="molecule type" value="Genomic_DNA"/>
</dbReference>
<dbReference type="RefSeq" id="WP_011064870.1">
    <property type="nucleotide sequence ID" value="NC_004193.1"/>
</dbReference>
<dbReference type="SMR" id="Q8ET01"/>
<dbReference type="STRING" id="221109.gene:10732667"/>
<dbReference type="KEGG" id="oih:OB0464"/>
<dbReference type="eggNOG" id="COG0083">
    <property type="taxonomic scope" value="Bacteria"/>
</dbReference>
<dbReference type="HOGENOM" id="CLU_041243_0_0_9"/>
<dbReference type="OrthoDB" id="9769912at2"/>
<dbReference type="PhylomeDB" id="Q8ET01"/>
<dbReference type="UniPathway" id="UPA00050">
    <property type="reaction ID" value="UER00064"/>
</dbReference>
<dbReference type="Proteomes" id="UP000000822">
    <property type="component" value="Chromosome"/>
</dbReference>
<dbReference type="GO" id="GO:0005737">
    <property type="term" value="C:cytoplasm"/>
    <property type="evidence" value="ECO:0007669"/>
    <property type="project" value="UniProtKB-SubCell"/>
</dbReference>
<dbReference type="GO" id="GO:0005524">
    <property type="term" value="F:ATP binding"/>
    <property type="evidence" value="ECO:0007669"/>
    <property type="project" value="UniProtKB-UniRule"/>
</dbReference>
<dbReference type="GO" id="GO:0004413">
    <property type="term" value="F:homoserine kinase activity"/>
    <property type="evidence" value="ECO:0007669"/>
    <property type="project" value="UniProtKB-UniRule"/>
</dbReference>
<dbReference type="GO" id="GO:0009088">
    <property type="term" value="P:threonine biosynthetic process"/>
    <property type="evidence" value="ECO:0007669"/>
    <property type="project" value="UniProtKB-UniRule"/>
</dbReference>
<dbReference type="Gene3D" id="3.30.230.10">
    <property type="match status" value="1"/>
</dbReference>
<dbReference type="Gene3D" id="3.30.70.890">
    <property type="entry name" value="GHMP kinase, C-terminal domain"/>
    <property type="match status" value="1"/>
</dbReference>
<dbReference type="HAMAP" id="MF_00384">
    <property type="entry name" value="Homoser_kinase"/>
    <property type="match status" value="1"/>
</dbReference>
<dbReference type="InterPro" id="IPR013750">
    <property type="entry name" value="GHMP_kinase_C_dom"/>
</dbReference>
<dbReference type="InterPro" id="IPR036554">
    <property type="entry name" value="GHMP_kinase_C_sf"/>
</dbReference>
<dbReference type="InterPro" id="IPR006204">
    <property type="entry name" value="GHMP_kinase_N_dom"/>
</dbReference>
<dbReference type="InterPro" id="IPR006203">
    <property type="entry name" value="GHMP_knse_ATP-bd_CS"/>
</dbReference>
<dbReference type="InterPro" id="IPR000870">
    <property type="entry name" value="Homoserine_kinase"/>
</dbReference>
<dbReference type="InterPro" id="IPR020568">
    <property type="entry name" value="Ribosomal_Su5_D2-typ_SF"/>
</dbReference>
<dbReference type="InterPro" id="IPR014721">
    <property type="entry name" value="Ribsml_uS5_D2-typ_fold_subgr"/>
</dbReference>
<dbReference type="NCBIfam" id="TIGR00191">
    <property type="entry name" value="thrB"/>
    <property type="match status" value="1"/>
</dbReference>
<dbReference type="PANTHER" id="PTHR20861:SF1">
    <property type="entry name" value="HOMOSERINE KINASE"/>
    <property type="match status" value="1"/>
</dbReference>
<dbReference type="PANTHER" id="PTHR20861">
    <property type="entry name" value="HOMOSERINE/4-DIPHOSPHOCYTIDYL-2-C-METHYL-D-ERYTHRITOL KINASE"/>
    <property type="match status" value="1"/>
</dbReference>
<dbReference type="Pfam" id="PF08544">
    <property type="entry name" value="GHMP_kinases_C"/>
    <property type="match status" value="1"/>
</dbReference>
<dbReference type="Pfam" id="PF00288">
    <property type="entry name" value="GHMP_kinases_N"/>
    <property type="match status" value="1"/>
</dbReference>
<dbReference type="PIRSF" id="PIRSF000676">
    <property type="entry name" value="Homoser_kin"/>
    <property type="match status" value="1"/>
</dbReference>
<dbReference type="PRINTS" id="PR00958">
    <property type="entry name" value="HOMSERKINASE"/>
</dbReference>
<dbReference type="SUPFAM" id="SSF55060">
    <property type="entry name" value="GHMP Kinase, C-terminal domain"/>
    <property type="match status" value="1"/>
</dbReference>
<dbReference type="SUPFAM" id="SSF54211">
    <property type="entry name" value="Ribosomal protein S5 domain 2-like"/>
    <property type="match status" value="1"/>
</dbReference>
<dbReference type="PROSITE" id="PS00627">
    <property type="entry name" value="GHMP_KINASES_ATP"/>
    <property type="match status" value="1"/>
</dbReference>
<accession>Q8ET01</accession>
<comment type="function">
    <text evidence="1">Catalyzes the ATP-dependent phosphorylation of L-homoserine to L-homoserine phosphate.</text>
</comment>
<comment type="catalytic activity">
    <reaction evidence="1">
        <text>L-homoserine + ATP = O-phospho-L-homoserine + ADP + H(+)</text>
        <dbReference type="Rhea" id="RHEA:13985"/>
        <dbReference type="ChEBI" id="CHEBI:15378"/>
        <dbReference type="ChEBI" id="CHEBI:30616"/>
        <dbReference type="ChEBI" id="CHEBI:57476"/>
        <dbReference type="ChEBI" id="CHEBI:57590"/>
        <dbReference type="ChEBI" id="CHEBI:456216"/>
        <dbReference type="EC" id="2.7.1.39"/>
    </reaction>
</comment>
<comment type="pathway">
    <text evidence="1">Amino-acid biosynthesis; L-threonine biosynthesis; L-threonine from L-aspartate: step 4/5.</text>
</comment>
<comment type="subcellular location">
    <subcellularLocation>
        <location evidence="1">Cytoplasm</location>
    </subcellularLocation>
</comment>
<comment type="similarity">
    <text evidence="1">Belongs to the GHMP kinase family. Homoserine kinase subfamily.</text>
</comment>
<gene>
    <name evidence="1" type="primary">thrB</name>
    <name type="ordered locus">OB0464</name>
</gene>
<reference key="1">
    <citation type="journal article" date="2002" name="Nucleic Acids Res.">
        <title>Genome sequence of Oceanobacillus iheyensis isolated from the Iheya Ridge and its unexpected adaptive capabilities to extreme environments.</title>
        <authorList>
            <person name="Takami H."/>
            <person name="Takaki Y."/>
            <person name="Uchiyama I."/>
        </authorList>
    </citation>
    <scope>NUCLEOTIDE SEQUENCE [LARGE SCALE GENOMIC DNA]</scope>
    <source>
        <strain>DSM 14371 / CIP 107618 / JCM 11309 / KCTC 3954 / HTE831</strain>
    </source>
</reference>